<feature type="chain" id="PRO_0000274702" description="Regulator of cell cycle RGCC">
    <location>
        <begin position="1"/>
        <end position="137"/>
    </location>
</feature>
<feature type="region of interest" description="Disordered" evidence="4">
    <location>
        <begin position="57"/>
        <end position="116"/>
    </location>
</feature>
<feature type="compositionally biased region" description="Low complexity" evidence="4">
    <location>
        <begin position="65"/>
        <end position="82"/>
    </location>
</feature>
<feature type="modified residue" description="Phosphoserine" evidence="7">
    <location>
        <position position="67"/>
    </location>
</feature>
<feature type="modified residue" description="Phosphoserine" evidence="2">
    <location>
        <position position="69"/>
    </location>
</feature>
<feature type="modified residue" description="Phosphoserine" evidence="2">
    <location>
        <position position="71"/>
    </location>
</feature>
<feature type="modified residue" description="Phosphoserine" evidence="2">
    <location>
        <position position="75"/>
    </location>
</feature>
<feature type="modified residue" description="Phosphoserine" evidence="3">
    <location>
        <position position="91"/>
    </location>
</feature>
<feature type="modified residue" description="Phosphoserine" evidence="7">
    <location>
        <position position="97"/>
    </location>
</feature>
<feature type="modified residue" description="Phosphothreonine" evidence="7">
    <location>
        <position position="111"/>
    </location>
</feature>
<feature type="sequence conflict" description="In Ref. 2; BAB23310." evidence="6" ref="2">
    <original>V</original>
    <variation>I</variation>
    <location>
        <position position="68"/>
    </location>
</feature>
<feature type="sequence conflict" description="In Ref. 2; BAB23310." evidence="6" ref="2">
    <original>D</original>
    <variation>N</variation>
    <location>
        <position position="70"/>
    </location>
</feature>
<keyword id="KW-0131">Cell cycle</keyword>
<keyword id="KW-0963">Cytoplasm</keyword>
<keyword id="KW-0206">Cytoskeleton</keyword>
<keyword id="KW-0539">Nucleus</keyword>
<keyword id="KW-0597">Phosphoprotein</keyword>
<keyword id="KW-1185">Reference proteome</keyword>
<dbReference type="EMBL" id="AF276981">
    <property type="protein sequence ID" value="AAK69442.1"/>
    <property type="molecule type" value="mRNA"/>
</dbReference>
<dbReference type="EMBL" id="AK004451">
    <property type="protein sequence ID" value="BAB23310.1"/>
    <property type="molecule type" value="mRNA"/>
</dbReference>
<dbReference type="EMBL" id="AK004705">
    <property type="protein sequence ID" value="BAB23490.1"/>
    <property type="molecule type" value="mRNA"/>
</dbReference>
<dbReference type="EMBL" id="CT010403">
    <property type="protein sequence ID" value="CAJ18609.1"/>
    <property type="molecule type" value="mRNA"/>
</dbReference>
<dbReference type="EMBL" id="BC049580">
    <property type="protein sequence ID" value="AAH49580.1"/>
    <property type="molecule type" value="mRNA"/>
</dbReference>
<dbReference type="EMBL" id="BC050935">
    <property type="protein sequence ID" value="AAH50935.1"/>
    <property type="molecule type" value="mRNA"/>
</dbReference>
<dbReference type="CCDS" id="CCDS49552.1"/>
<dbReference type="RefSeq" id="NP_079703.2">
    <property type="nucleotide sequence ID" value="NM_025427.2"/>
</dbReference>
<dbReference type="FunCoup" id="Q9DBX1">
    <property type="interactions" value="1429"/>
</dbReference>
<dbReference type="STRING" id="10090.ENSMUSP00000022595"/>
<dbReference type="GlyGen" id="Q9DBX1">
    <property type="glycosylation" value="1 site"/>
</dbReference>
<dbReference type="iPTMnet" id="Q9DBX1"/>
<dbReference type="PhosphoSitePlus" id="Q9DBX1"/>
<dbReference type="jPOST" id="Q9DBX1"/>
<dbReference type="PaxDb" id="10090-ENSMUSP00000022595"/>
<dbReference type="PeptideAtlas" id="Q9DBX1"/>
<dbReference type="ProteomicsDB" id="255319"/>
<dbReference type="Pumba" id="Q9DBX1"/>
<dbReference type="Antibodypedia" id="23431">
    <property type="antibodies" value="82 antibodies from 17 providers"/>
</dbReference>
<dbReference type="DNASU" id="66214"/>
<dbReference type="Ensembl" id="ENSMUST00000022595.8">
    <property type="protein sequence ID" value="ENSMUSP00000022595.8"/>
    <property type="gene ID" value="ENSMUSG00000022018.8"/>
</dbReference>
<dbReference type="GeneID" id="66214"/>
<dbReference type="KEGG" id="mmu:66214"/>
<dbReference type="UCSC" id="uc007ust.1">
    <property type="organism name" value="mouse"/>
</dbReference>
<dbReference type="AGR" id="MGI:1913464"/>
<dbReference type="CTD" id="28984"/>
<dbReference type="MGI" id="MGI:1913464">
    <property type="gene designation" value="Rgcc"/>
</dbReference>
<dbReference type="VEuPathDB" id="HostDB:ENSMUSG00000022018"/>
<dbReference type="eggNOG" id="ENOG502S1UB">
    <property type="taxonomic scope" value="Eukaryota"/>
</dbReference>
<dbReference type="GeneTree" id="ENSGT00390000011709"/>
<dbReference type="HOGENOM" id="CLU_154700_0_0_1"/>
<dbReference type="InParanoid" id="Q9DBX1"/>
<dbReference type="OMA" id="KERHFQY"/>
<dbReference type="OrthoDB" id="9887289at2759"/>
<dbReference type="PhylomeDB" id="Q9DBX1"/>
<dbReference type="TreeFam" id="TF336312"/>
<dbReference type="BioGRID-ORCS" id="66214">
    <property type="hits" value="3 hits in 79 CRISPR screens"/>
</dbReference>
<dbReference type="ChiTaRS" id="Rgcc">
    <property type="organism name" value="mouse"/>
</dbReference>
<dbReference type="PRO" id="PR:Q9DBX1"/>
<dbReference type="Proteomes" id="UP000000589">
    <property type="component" value="Chromosome 14"/>
</dbReference>
<dbReference type="RNAct" id="Q9DBX1">
    <property type="molecule type" value="protein"/>
</dbReference>
<dbReference type="Bgee" id="ENSMUSG00000022018">
    <property type="expression patterns" value="Expressed in epididymal fat pad and 274 other cell types or tissues"/>
</dbReference>
<dbReference type="GO" id="GO:0005813">
    <property type="term" value="C:centrosome"/>
    <property type="evidence" value="ECO:0007669"/>
    <property type="project" value="UniProtKB-SubCell"/>
</dbReference>
<dbReference type="GO" id="GO:0005737">
    <property type="term" value="C:cytoplasm"/>
    <property type="evidence" value="ECO:0000266"/>
    <property type="project" value="MGI"/>
</dbReference>
<dbReference type="GO" id="GO:0005730">
    <property type="term" value="C:nucleolus"/>
    <property type="evidence" value="ECO:0007669"/>
    <property type="project" value="Ensembl"/>
</dbReference>
<dbReference type="GO" id="GO:0005654">
    <property type="term" value="C:nucleoplasm"/>
    <property type="evidence" value="ECO:0007669"/>
    <property type="project" value="Ensembl"/>
</dbReference>
<dbReference type="GO" id="GO:0005634">
    <property type="term" value="C:nucleus"/>
    <property type="evidence" value="ECO:0000266"/>
    <property type="project" value="MGI"/>
</dbReference>
<dbReference type="GO" id="GO:0030295">
    <property type="term" value="F:protein kinase activator activity"/>
    <property type="evidence" value="ECO:0000266"/>
    <property type="project" value="MGI"/>
</dbReference>
<dbReference type="GO" id="GO:0019901">
    <property type="term" value="F:protein kinase binding"/>
    <property type="evidence" value="ECO:0007669"/>
    <property type="project" value="Ensembl"/>
</dbReference>
<dbReference type="GO" id="GO:0070412">
    <property type="term" value="F:R-SMAD binding"/>
    <property type="evidence" value="ECO:0007669"/>
    <property type="project" value="Ensembl"/>
</dbReference>
<dbReference type="GO" id="GO:0071456">
    <property type="term" value="P:cellular response to hypoxia"/>
    <property type="evidence" value="ECO:0007669"/>
    <property type="project" value="Ensembl"/>
</dbReference>
<dbReference type="GO" id="GO:0006956">
    <property type="term" value="P:complement activation"/>
    <property type="evidence" value="ECO:0007669"/>
    <property type="project" value="Ensembl"/>
</dbReference>
<dbReference type="GO" id="GO:0072537">
    <property type="term" value="P:fibroblast activation"/>
    <property type="evidence" value="ECO:0000315"/>
    <property type="project" value="UniProtKB"/>
</dbReference>
<dbReference type="GO" id="GO:0000082">
    <property type="term" value="P:G1/S transition of mitotic cell cycle"/>
    <property type="evidence" value="ECO:0000266"/>
    <property type="project" value="MGI"/>
</dbReference>
<dbReference type="GO" id="GO:0016525">
    <property type="term" value="P:negative regulation of angiogenesis"/>
    <property type="evidence" value="ECO:0007669"/>
    <property type="project" value="Ensembl"/>
</dbReference>
<dbReference type="GO" id="GO:0043537">
    <property type="term" value="P:negative regulation of blood vessel endothelial cell migration"/>
    <property type="evidence" value="ECO:0007669"/>
    <property type="project" value="Ensembl"/>
</dbReference>
<dbReference type="GO" id="GO:2000048">
    <property type="term" value="P:negative regulation of cell-cell adhesion mediated by cadherin"/>
    <property type="evidence" value="ECO:0007669"/>
    <property type="project" value="Ensembl"/>
</dbReference>
<dbReference type="GO" id="GO:0001937">
    <property type="term" value="P:negative regulation of endothelial cell proliferation"/>
    <property type="evidence" value="ECO:0007669"/>
    <property type="project" value="Ensembl"/>
</dbReference>
<dbReference type="GO" id="GO:0001100">
    <property type="term" value="P:negative regulation of exit from mitosis"/>
    <property type="evidence" value="ECO:0007669"/>
    <property type="project" value="Ensembl"/>
</dbReference>
<dbReference type="GO" id="GO:0090272">
    <property type="term" value="P:negative regulation of fibroblast growth factor production"/>
    <property type="evidence" value="ECO:0007669"/>
    <property type="project" value="Ensembl"/>
</dbReference>
<dbReference type="GO" id="GO:0032967">
    <property type="term" value="P:positive regulation of collagen biosynthetic process"/>
    <property type="evidence" value="ECO:0007669"/>
    <property type="project" value="Ensembl"/>
</dbReference>
<dbReference type="GO" id="GO:0001819">
    <property type="term" value="P:positive regulation of cytokine production"/>
    <property type="evidence" value="ECO:0007669"/>
    <property type="project" value="Ensembl"/>
</dbReference>
<dbReference type="GO" id="GO:2000353">
    <property type="term" value="P:positive regulation of endothelial cell apoptotic process"/>
    <property type="evidence" value="ECO:0007669"/>
    <property type="project" value="Ensembl"/>
</dbReference>
<dbReference type="GO" id="GO:0010718">
    <property type="term" value="P:positive regulation of epithelial to mesenchymal transition"/>
    <property type="evidence" value="ECO:0007669"/>
    <property type="project" value="Ensembl"/>
</dbReference>
<dbReference type="GO" id="GO:1901203">
    <property type="term" value="P:positive regulation of extracellular matrix assembly"/>
    <property type="evidence" value="ECO:0007669"/>
    <property type="project" value="Ensembl"/>
</dbReference>
<dbReference type="GO" id="GO:0003331">
    <property type="term" value="P:positive regulation of extracellular matrix constituent secretion"/>
    <property type="evidence" value="ECO:0007669"/>
    <property type="project" value="Ensembl"/>
</dbReference>
<dbReference type="GO" id="GO:1900087">
    <property type="term" value="P:positive regulation of G1/S transition of mitotic cell cycle"/>
    <property type="evidence" value="ECO:0007669"/>
    <property type="project" value="Ensembl"/>
</dbReference>
<dbReference type="GO" id="GO:0045840">
    <property type="term" value="P:positive regulation of mitotic nuclear division"/>
    <property type="evidence" value="ECO:0007669"/>
    <property type="project" value="Ensembl"/>
</dbReference>
<dbReference type="GO" id="GO:0051496">
    <property type="term" value="P:positive regulation of stress fiber assembly"/>
    <property type="evidence" value="ECO:0007669"/>
    <property type="project" value="Ensembl"/>
</dbReference>
<dbReference type="GO" id="GO:0045944">
    <property type="term" value="P:positive regulation of transcription by RNA polymerase II"/>
    <property type="evidence" value="ECO:0007669"/>
    <property type="project" value="Ensembl"/>
</dbReference>
<dbReference type="GO" id="GO:1904707">
    <property type="term" value="P:positive regulation of vascular associated smooth muscle cell proliferation"/>
    <property type="evidence" value="ECO:0007669"/>
    <property type="project" value="Ensembl"/>
</dbReference>
<dbReference type="InterPro" id="IPR029252">
    <property type="entry name" value="RGCC"/>
</dbReference>
<dbReference type="PANTHER" id="PTHR32193">
    <property type="entry name" value="REGULATOR OF CELL CYCLE RGCC"/>
    <property type="match status" value="1"/>
</dbReference>
<dbReference type="PANTHER" id="PTHR32193:SF3">
    <property type="entry name" value="REGULATOR OF CELL CYCLE RGCC"/>
    <property type="match status" value="1"/>
</dbReference>
<dbReference type="Pfam" id="PF15151">
    <property type="entry name" value="RGCC"/>
    <property type="match status" value="1"/>
</dbReference>
<reference key="1">
    <citation type="journal article" date="2002" name="J. Biol. Chem.">
        <title>RGC-32 increases p34CDC2 kinase activity and entry of aortic smooth muscle cells into S-phase.</title>
        <authorList>
            <person name="Badea T."/>
            <person name="Niculescu F."/>
            <person name="Soane L."/>
            <person name="Fosbrink M."/>
            <person name="Sorana H."/>
            <person name="Rus V."/>
            <person name="Shin M.L."/>
            <person name="Rus H."/>
        </authorList>
    </citation>
    <scope>NUCLEOTIDE SEQUENCE [MRNA]</scope>
</reference>
<reference key="2">
    <citation type="journal article" date="2005" name="Science">
        <title>The transcriptional landscape of the mammalian genome.</title>
        <authorList>
            <person name="Carninci P."/>
            <person name="Kasukawa T."/>
            <person name="Katayama S."/>
            <person name="Gough J."/>
            <person name="Frith M.C."/>
            <person name="Maeda N."/>
            <person name="Oyama R."/>
            <person name="Ravasi T."/>
            <person name="Lenhard B."/>
            <person name="Wells C."/>
            <person name="Kodzius R."/>
            <person name="Shimokawa K."/>
            <person name="Bajic V.B."/>
            <person name="Brenner S.E."/>
            <person name="Batalov S."/>
            <person name="Forrest A.R."/>
            <person name="Zavolan M."/>
            <person name="Davis M.J."/>
            <person name="Wilming L.G."/>
            <person name="Aidinis V."/>
            <person name="Allen J.E."/>
            <person name="Ambesi-Impiombato A."/>
            <person name="Apweiler R."/>
            <person name="Aturaliya R.N."/>
            <person name="Bailey T.L."/>
            <person name="Bansal M."/>
            <person name="Baxter L."/>
            <person name="Beisel K.W."/>
            <person name="Bersano T."/>
            <person name="Bono H."/>
            <person name="Chalk A.M."/>
            <person name="Chiu K.P."/>
            <person name="Choudhary V."/>
            <person name="Christoffels A."/>
            <person name="Clutterbuck D.R."/>
            <person name="Crowe M.L."/>
            <person name="Dalla E."/>
            <person name="Dalrymple B.P."/>
            <person name="de Bono B."/>
            <person name="Della Gatta G."/>
            <person name="di Bernardo D."/>
            <person name="Down T."/>
            <person name="Engstrom P."/>
            <person name="Fagiolini M."/>
            <person name="Faulkner G."/>
            <person name="Fletcher C.F."/>
            <person name="Fukushima T."/>
            <person name="Furuno M."/>
            <person name="Futaki S."/>
            <person name="Gariboldi M."/>
            <person name="Georgii-Hemming P."/>
            <person name="Gingeras T.R."/>
            <person name="Gojobori T."/>
            <person name="Green R.E."/>
            <person name="Gustincich S."/>
            <person name="Harbers M."/>
            <person name="Hayashi Y."/>
            <person name="Hensch T.K."/>
            <person name="Hirokawa N."/>
            <person name="Hill D."/>
            <person name="Huminiecki L."/>
            <person name="Iacono M."/>
            <person name="Ikeo K."/>
            <person name="Iwama A."/>
            <person name="Ishikawa T."/>
            <person name="Jakt M."/>
            <person name="Kanapin A."/>
            <person name="Katoh M."/>
            <person name="Kawasawa Y."/>
            <person name="Kelso J."/>
            <person name="Kitamura H."/>
            <person name="Kitano H."/>
            <person name="Kollias G."/>
            <person name="Krishnan S.P."/>
            <person name="Kruger A."/>
            <person name="Kummerfeld S.K."/>
            <person name="Kurochkin I.V."/>
            <person name="Lareau L.F."/>
            <person name="Lazarevic D."/>
            <person name="Lipovich L."/>
            <person name="Liu J."/>
            <person name="Liuni S."/>
            <person name="McWilliam S."/>
            <person name="Madan Babu M."/>
            <person name="Madera M."/>
            <person name="Marchionni L."/>
            <person name="Matsuda H."/>
            <person name="Matsuzawa S."/>
            <person name="Miki H."/>
            <person name="Mignone F."/>
            <person name="Miyake S."/>
            <person name="Morris K."/>
            <person name="Mottagui-Tabar S."/>
            <person name="Mulder N."/>
            <person name="Nakano N."/>
            <person name="Nakauchi H."/>
            <person name="Ng P."/>
            <person name="Nilsson R."/>
            <person name="Nishiguchi S."/>
            <person name="Nishikawa S."/>
            <person name="Nori F."/>
            <person name="Ohara O."/>
            <person name="Okazaki Y."/>
            <person name="Orlando V."/>
            <person name="Pang K.C."/>
            <person name="Pavan W.J."/>
            <person name="Pavesi G."/>
            <person name="Pesole G."/>
            <person name="Petrovsky N."/>
            <person name="Piazza S."/>
            <person name="Reed J."/>
            <person name="Reid J.F."/>
            <person name="Ring B.Z."/>
            <person name="Ringwald M."/>
            <person name="Rost B."/>
            <person name="Ruan Y."/>
            <person name="Salzberg S.L."/>
            <person name="Sandelin A."/>
            <person name="Schneider C."/>
            <person name="Schoenbach C."/>
            <person name="Sekiguchi K."/>
            <person name="Semple C.A."/>
            <person name="Seno S."/>
            <person name="Sessa L."/>
            <person name="Sheng Y."/>
            <person name="Shibata Y."/>
            <person name="Shimada H."/>
            <person name="Shimada K."/>
            <person name="Silva D."/>
            <person name="Sinclair B."/>
            <person name="Sperling S."/>
            <person name="Stupka E."/>
            <person name="Sugiura K."/>
            <person name="Sultana R."/>
            <person name="Takenaka Y."/>
            <person name="Taki K."/>
            <person name="Tammoja K."/>
            <person name="Tan S.L."/>
            <person name="Tang S."/>
            <person name="Taylor M.S."/>
            <person name="Tegner J."/>
            <person name="Teichmann S.A."/>
            <person name="Ueda H.R."/>
            <person name="van Nimwegen E."/>
            <person name="Verardo R."/>
            <person name="Wei C.L."/>
            <person name="Yagi K."/>
            <person name="Yamanishi H."/>
            <person name="Zabarovsky E."/>
            <person name="Zhu S."/>
            <person name="Zimmer A."/>
            <person name="Hide W."/>
            <person name="Bult C."/>
            <person name="Grimmond S.M."/>
            <person name="Teasdale R.D."/>
            <person name="Liu E.T."/>
            <person name="Brusic V."/>
            <person name="Quackenbush J."/>
            <person name="Wahlestedt C."/>
            <person name="Mattick J.S."/>
            <person name="Hume D.A."/>
            <person name="Kai C."/>
            <person name="Sasaki D."/>
            <person name="Tomaru Y."/>
            <person name="Fukuda S."/>
            <person name="Kanamori-Katayama M."/>
            <person name="Suzuki M."/>
            <person name="Aoki J."/>
            <person name="Arakawa T."/>
            <person name="Iida J."/>
            <person name="Imamura K."/>
            <person name="Itoh M."/>
            <person name="Kato T."/>
            <person name="Kawaji H."/>
            <person name="Kawagashira N."/>
            <person name="Kawashima T."/>
            <person name="Kojima M."/>
            <person name="Kondo S."/>
            <person name="Konno H."/>
            <person name="Nakano K."/>
            <person name="Ninomiya N."/>
            <person name="Nishio T."/>
            <person name="Okada M."/>
            <person name="Plessy C."/>
            <person name="Shibata K."/>
            <person name="Shiraki T."/>
            <person name="Suzuki S."/>
            <person name="Tagami M."/>
            <person name="Waki K."/>
            <person name="Watahiki A."/>
            <person name="Okamura-Oho Y."/>
            <person name="Suzuki H."/>
            <person name="Kawai J."/>
            <person name="Hayashizaki Y."/>
        </authorList>
    </citation>
    <scope>NUCLEOTIDE SEQUENCE [LARGE SCALE MRNA]</scope>
    <source>
        <strain>C57BL/6J</strain>
        <tissue>Embryo</tissue>
        <tissue>Lung</tissue>
    </source>
</reference>
<reference key="3">
    <citation type="submission" date="2005-07" db="EMBL/GenBank/DDBJ databases">
        <title>Cloning of mouse full open reading frames in Gateway(R) system entry vector (pDONR201).</title>
        <authorList>
            <person name="Ebert L."/>
            <person name="Muenstermann E."/>
            <person name="Schatten R."/>
            <person name="Henze S."/>
            <person name="Bohn E."/>
            <person name="Mollenhauer J."/>
            <person name="Wiemann S."/>
            <person name="Schick M."/>
            <person name="Korn B."/>
        </authorList>
    </citation>
    <scope>NUCLEOTIDE SEQUENCE [LARGE SCALE MRNA]</scope>
</reference>
<reference key="4">
    <citation type="journal article" date="2004" name="Genome Res.">
        <title>The status, quality, and expansion of the NIH full-length cDNA project: the Mammalian Gene Collection (MGC).</title>
        <authorList>
            <consortium name="The MGC Project Team"/>
        </authorList>
    </citation>
    <scope>NUCLEOTIDE SEQUENCE [LARGE SCALE MRNA]</scope>
    <source>
        <strain>C57BL/6J</strain>
        <tissue>Brain</tissue>
        <tissue>Testis</tissue>
    </source>
</reference>
<reference key="5">
    <citation type="journal article" date="2010" name="Cell">
        <title>A tissue-specific atlas of mouse protein phosphorylation and expression.</title>
        <authorList>
            <person name="Huttlin E.L."/>
            <person name="Jedrychowski M.P."/>
            <person name="Elias J.E."/>
            <person name="Goswami T."/>
            <person name="Rad R."/>
            <person name="Beausoleil S.A."/>
            <person name="Villen J."/>
            <person name="Haas W."/>
            <person name="Sowa M.E."/>
            <person name="Gygi S.P."/>
        </authorList>
    </citation>
    <scope>PHOSPHORYLATION [LARGE SCALE ANALYSIS] AT SER-67; SER-97 AND THR-111</scope>
    <scope>IDENTIFICATION BY MASS SPECTROMETRY [LARGE SCALE ANALYSIS]</scope>
    <source>
        <tissue>Brown adipose tissue</tissue>
        <tissue>Heart</tissue>
        <tissue>Kidney</tissue>
        <tissue>Lung</tissue>
        <tissue>Pancreas</tissue>
        <tissue>Spleen</tissue>
    </source>
</reference>
<reference key="6">
    <citation type="journal article" date="2011" name="J. Biol. Chem.">
        <title>Response gene to complement 32 is essential for fibroblast activation in renal fibrosis.</title>
        <authorList>
            <person name="Li Z."/>
            <person name="Xie W.B."/>
            <person name="Escano C.S."/>
            <person name="Asico L.D."/>
            <person name="Xie Q."/>
            <person name="Jose P.A."/>
            <person name="Chen S.Y."/>
        </authorList>
    </citation>
    <scope>FUNCTION</scope>
    <scope>INTERACTION WITH SMAD3</scope>
</reference>
<name>RGCC_MOUSE</name>
<proteinExistence type="evidence at protein level"/>
<gene>
    <name type="primary">Rgcc</name>
    <name type="synonym">Rgc32</name>
</gene>
<sequence>MKPPSAQSSPAAVAAAAPAMDSAAAADLTDVLCEFDAVLADFASPFHERHFHYEEHLERMKRRSSASVSDSSGFSDSESADSVYRDSFTFSDEKLNSPTNSSPALLPSAVTPRKAKLGDTKELEDFIADLDRTLASM</sequence>
<protein>
    <recommendedName>
        <fullName>Regulator of cell cycle RGCC</fullName>
    </recommendedName>
    <alternativeName>
        <fullName>Response gene to complement 32 protein</fullName>
        <shortName>RGC-32</shortName>
    </alternativeName>
</protein>
<organism>
    <name type="scientific">Mus musculus</name>
    <name type="common">Mouse</name>
    <dbReference type="NCBI Taxonomy" id="10090"/>
    <lineage>
        <taxon>Eukaryota</taxon>
        <taxon>Metazoa</taxon>
        <taxon>Chordata</taxon>
        <taxon>Craniata</taxon>
        <taxon>Vertebrata</taxon>
        <taxon>Euteleostomi</taxon>
        <taxon>Mammalia</taxon>
        <taxon>Eutheria</taxon>
        <taxon>Euarchontoglires</taxon>
        <taxon>Glires</taxon>
        <taxon>Rodentia</taxon>
        <taxon>Myomorpha</taxon>
        <taxon>Muroidea</taxon>
        <taxon>Muridae</taxon>
        <taxon>Murinae</taxon>
        <taxon>Mus</taxon>
        <taxon>Mus</taxon>
    </lineage>
</organism>
<evidence type="ECO:0000250" key="1"/>
<evidence type="ECO:0000250" key="2">
    <source>
        <dbReference type="UniProtKB" id="Q9H4X1"/>
    </source>
</evidence>
<evidence type="ECO:0000250" key="3">
    <source>
        <dbReference type="UniProtKB" id="Q9Z2P4"/>
    </source>
</evidence>
<evidence type="ECO:0000256" key="4">
    <source>
        <dbReference type="SAM" id="MobiDB-lite"/>
    </source>
</evidence>
<evidence type="ECO:0000269" key="5">
    <source>
    </source>
</evidence>
<evidence type="ECO:0000305" key="6"/>
<evidence type="ECO:0007744" key="7">
    <source>
    </source>
</evidence>
<accession>Q9DBX1</accession>
<accession>Q9D0U0</accession>
<comment type="function">
    <text evidence="5">Modulates the activity of cell cycle-specific kinases. Enhances CDK1 activity. May contribute to the regulation of the cell cycle. May inhibit growth of glioma cells by promoting arrest of mitotic progression at the G2/M transition. Fibrogenic factor contributing to the pathogenesis of renal fibrosis through fibroblast activation.</text>
</comment>
<comment type="subunit">
    <text evidence="1 5">Interacts with CDK1 and PLK1 (By similarity). Interacts with SMAD3.</text>
</comment>
<comment type="subcellular location">
    <subcellularLocation>
        <location evidence="1">Cytoplasm</location>
    </subcellularLocation>
    <subcellularLocation>
        <location evidence="1">Nucleus</location>
    </subcellularLocation>
    <subcellularLocation>
        <location evidence="1">Cytoplasm</location>
        <location evidence="1">Cytoskeleton</location>
        <location evidence="1">Microtubule organizing center</location>
        <location evidence="1">Centrosome</location>
    </subcellularLocation>
    <text evidence="1">Cytoplasmic in unstimulated cells. Nuclear after activation by complement. Associated with the centrosome during prometaphase and metaphase (By similarity).</text>
</comment>